<gene>
    <name evidence="9" type="primary">comFA</name>
    <name evidence="9" type="ordered locus">spr2013</name>
</gene>
<proteinExistence type="evidence at protein level"/>
<organism>
    <name type="scientific">Streptococcus pneumoniae (strain ATCC BAA-255 / R6)</name>
    <dbReference type="NCBI Taxonomy" id="171101"/>
    <lineage>
        <taxon>Bacteria</taxon>
        <taxon>Bacillati</taxon>
        <taxon>Bacillota</taxon>
        <taxon>Bacilli</taxon>
        <taxon>Lactobacillales</taxon>
        <taxon>Streptococcaceae</taxon>
        <taxon>Streptococcus</taxon>
    </lineage>
</organism>
<name>COMFA_STRR6</name>
<sequence>MKVNLDYLGRLFTENELTEEERQLAEKLPAMRKEKGKLFCQRCNSTILEEWYLPIGAYYCRECLLMKRVRSDQTLYYFPQEDFPKQDVLKWRGQLTPFQEKVSEGLLQAVDKQKPTLVHAVTGAGKTEMIYQVVAKVINAGGAVCLASPRIDVCLELYKRLQQDFSCGIALLHGESEPYFRTPLVVATTHQLLKFYQAFDLLIVDEVDAFPYVDNPMLYHAVKNSVKENGLRIFLTATSTNELDKKVRLGELKRLNLPRRFHGNPLIIPKPIWLSDFNRYLDKNRLSPKLKSYIEKQRKTAYPLLIFASEIKKGEQLAEILQEQFPNEKIGFVSSVTEDRLEQVQAFRDGELTILISTTILERGVTFPCVDVFVVEANHRLFTKSSLIQIGGRVGRSMDRPTGDLLFFHDGLNASIKKAIKEIQMMNKEAGL</sequence>
<reference evidence="9" key="1">
    <citation type="journal article" date="2001" name="J. Bacteriol.">
        <title>Genome of the bacterium Streptococcus pneumoniae strain R6.</title>
        <authorList>
            <person name="Hoskins J."/>
            <person name="Alborn W.E. Jr."/>
            <person name="Arnold J."/>
            <person name="Blaszczak L.C."/>
            <person name="Burgett S."/>
            <person name="DeHoff B.S."/>
            <person name="Estrem S.T."/>
            <person name="Fritz L."/>
            <person name="Fu D.-J."/>
            <person name="Fuller W."/>
            <person name="Geringer C."/>
            <person name="Gilmour R."/>
            <person name="Glass J.S."/>
            <person name="Khoja H."/>
            <person name="Kraft A.R."/>
            <person name="Lagace R.E."/>
            <person name="LeBlanc D.J."/>
            <person name="Lee L.N."/>
            <person name="Lefkowitz E.J."/>
            <person name="Lu J."/>
            <person name="Matsushima P."/>
            <person name="McAhren S.M."/>
            <person name="McHenney M."/>
            <person name="McLeaster K."/>
            <person name="Mundy C.W."/>
            <person name="Nicas T.I."/>
            <person name="Norris F.H."/>
            <person name="O'Gara M."/>
            <person name="Peery R.B."/>
            <person name="Robertson G.T."/>
            <person name="Rockey P."/>
            <person name="Sun P.-M."/>
            <person name="Winkler M.E."/>
            <person name="Yang Y."/>
            <person name="Young-Bellido M."/>
            <person name="Zhao G."/>
            <person name="Zook C.A."/>
            <person name="Baltz R.H."/>
            <person name="Jaskunas S.R."/>
            <person name="Rosteck P.R. Jr."/>
            <person name="Skatrud P.L."/>
            <person name="Glass J.I."/>
        </authorList>
    </citation>
    <scope>NUCLEOTIDE SEQUENCE [LARGE SCALE GENOMIC DNA]</scope>
    <source>
        <strain>ATCC BAA-255 / R6</strain>
    </source>
</reference>
<reference key="2">
    <citation type="journal article" date="2017" name="Mol. Microbiol.">
        <title>Bacterial transformation: ComFA is a DNA-dependent ATPase that forms complexes with ComFC and DprA.</title>
        <authorList>
            <person name="Diallo A."/>
            <person name="Foster H.R."/>
            <person name="Gromek K.A."/>
            <person name="Perry T.N."/>
            <person name="Dujeancourt A."/>
            <person name="Krasteva P.V."/>
            <person name="Gubellini F."/>
            <person name="Falbel T.G."/>
            <person name="Burton B.M."/>
            <person name="Fronzes R."/>
        </authorList>
    </citation>
    <scope>FUNCTION AS AN ATPASE</scope>
    <scope>CATALYTIC ACTIVITY</scope>
    <scope>COFACTOR</scope>
    <scope>INTERACTION WITH COMFC</scope>
    <scope>INTERACTION WITH DPRA</scope>
    <scope>SUBUNIT</scope>
    <scope>DOMAIN</scope>
    <scope>DISRUPTION PHENOTYPE</scope>
    <scope>DNA-BINDING</scope>
    <scope>MUTAGENESIS OF ASP-205</scope>
    <source>
        <strain>R6 / R800</strain>
    </source>
</reference>
<reference key="3">
    <citation type="journal article" date="2022" name="J. Bacteriol.">
        <title>Natural Transformation Protein ComFA Exhibits Single-Stranded DNA Translocase Activity.</title>
        <authorList>
            <person name="Foster H.R."/>
            <person name="Lin X."/>
            <person name="Srikant S."/>
            <person name="Cueny R.R."/>
            <person name="Falbel T.G."/>
            <person name="Keck J.L."/>
            <person name="Gaudet R."/>
            <person name="Burton B.M."/>
        </authorList>
    </citation>
    <scope>FUNCTION AS AN ATPASE</scope>
    <scope>NOT A HELICASE</scope>
    <scope>DNA-BINDING</scope>
    <scope>MUTAGENESIS OF ASP-205</scope>
    <source>
        <strain>R6 / R800</strain>
    </source>
</reference>
<feature type="chain" id="PRO_0000462584" description="Competence protein ComFA">
    <location>
        <begin position="1"/>
        <end position="432"/>
    </location>
</feature>
<feature type="domain" description="Helicase ATP-binding" evidence="2">
    <location>
        <begin position="107"/>
        <end position="257"/>
    </location>
</feature>
<feature type="domain" description="Helicase C-terminal" evidence="3">
    <location>
        <begin position="289"/>
        <end position="432"/>
    </location>
</feature>
<feature type="short sequence motif" description="DEAD box" evidence="2">
    <location>
        <begin position="205"/>
        <end position="208"/>
    </location>
</feature>
<feature type="binding site" evidence="7">
    <location>
        <position position="40"/>
    </location>
    <ligand>
        <name>Zn(2+)</name>
        <dbReference type="ChEBI" id="CHEBI:29105"/>
    </ligand>
</feature>
<feature type="binding site" evidence="7">
    <location>
        <position position="43"/>
    </location>
    <ligand>
        <name>Zn(2+)</name>
        <dbReference type="ChEBI" id="CHEBI:29105"/>
    </ligand>
</feature>
<feature type="binding site" evidence="7">
    <location>
        <position position="60"/>
    </location>
    <ligand>
        <name>Zn(2+)</name>
        <dbReference type="ChEBI" id="CHEBI:29105"/>
    </ligand>
</feature>
<feature type="binding site" evidence="7">
    <location>
        <position position="63"/>
    </location>
    <ligand>
        <name>Zn(2+)</name>
        <dbReference type="ChEBI" id="CHEBI:29105"/>
    </ligand>
</feature>
<feature type="binding site" evidence="2">
    <location>
        <begin position="120"/>
        <end position="127"/>
    </location>
    <ligand>
        <name>ATP</name>
        <dbReference type="ChEBI" id="CHEBI:30616"/>
    </ligand>
</feature>
<feature type="mutagenesis site" description="100-fold decreased ATPase activity, no change in ssDNA-binding." evidence="4 5">
    <original>D</original>
    <variation>A</variation>
    <location>
        <position position="205"/>
    </location>
</feature>
<evidence type="ECO:0000250" key="1">
    <source>
        <dbReference type="UniProtKB" id="P39145"/>
    </source>
</evidence>
<evidence type="ECO:0000255" key="2">
    <source>
        <dbReference type="PROSITE-ProRule" id="PRU00541"/>
    </source>
</evidence>
<evidence type="ECO:0000255" key="3">
    <source>
        <dbReference type="PROSITE-ProRule" id="PRU00542"/>
    </source>
</evidence>
<evidence type="ECO:0000269" key="4">
    <source>
    </source>
</evidence>
<evidence type="ECO:0000269" key="5">
    <source>
    </source>
</evidence>
<evidence type="ECO:0000305" key="6"/>
<evidence type="ECO:0000305" key="7">
    <source>
    </source>
</evidence>
<evidence type="ECO:0000305" key="8">
    <source>
    </source>
</evidence>
<evidence type="ECO:0000312" key="9">
    <source>
        <dbReference type="EMBL" id="AAL00815.1"/>
    </source>
</evidence>
<comment type="function">
    <text evidence="4 5 8">Involved in transformation (genetic competence for DNA uptake) (PubMed:28618091). DNA uptake is energy dependent, this protein may provide the driving force for DNA uptake (Probable) (PubMed:35041498). Does not have helicase activity, translocates on single-stranded (ss)DNA in a 5'-3' direction in an ATP-dependent manner, but does not unwind double-stranded (ds)DNA (tested with 5'- and 3'-overhang dsDNA) (PubMed:35041498). ATP hydrolysis causes the release of ssDNA from ComFA (PubMed:35041498). A ssDNA-stimulated ATPase; dsDNA does not stimulate ATPase (PubMed:28618091, PubMed:35041498). ATP hydrolysis causes the release of ssDNA from ComFA (PubMed:35041498). ComFC has no effect on ATPase activity (PubMed:28618091). Binds ssDNA but only very poorly to dsDNA in the absence of ATP (PubMed:28618091, PubMed:35041498). Binding to ssDNA does not require free DNA ends (PubMed:35041498).</text>
</comment>
<comment type="cofactor">
    <cofactor evidence="4">
        <name>Zn(2+)</name>
        <dbReference type="ChEBI" id="CHEBI:29105"/>
    </cofactor>
</comment>
<comment type="subunit">
    <text evidence="4">Monomer and dimer in solution (PubMed:28618091). Interacts with DprA and ComFC; ComFA-ComFC form rings about 150 Angstroms in diameter with apparent 6-fold symmetry (PubMed:28618091).</text>
</comment>
<comment type="subcellular location">
    <subcellularLocation>
        <location evidence="1">Cytoplasm</location>
    </subcellularLocation>
    <text evidence="1">Localizes mostly to the cell poles during the development of competence.</text>
</comment>
<comment type="developmental stage">
    <text evidence="1">A late competence gene.</text>
</comment>
<comment type="domain">
    <text evidence="4">Oligomerizes via its C-terminus (residues 73-432).</text>
</comment>
<comment type="disruption phenotype">
    <text evidence="4">Over 1000-fold decrease in transformation efficiency.</text>
</comment>
<comment type="similarity">
    <text evidence="6">Belongs to the DEAD box helicase family.</text>
</comment>
<keyword id="KW-0067">ATP-binding</keyword>
<keyword id="KW-0178">Competence</keyword>
<keyword id="KW-0963">Cytoplasm</keyword>
<keyword id="KW-0238">DNA-binding</keyword>
<keyword id="KW-0378">Hydrolase</keyword>
<keyword id="KW-0479">Metal-binding</keyword>
<keyword id="KW-0547">Nucleotide-binding</keyword>
<keyword id="KW-1185">Reference proteome</keyword>
<keyword id="KW-0862">Zinc</keyword>
<dbReference type="EC" id="3.6.4.-" evidence="4"/>
<dbReference type="EMBL" id="AE007317">
    <property type="protein sequence ID" value="AAL00815.1"/>
    <property type="molecule type" value="Genomic_DNA"/>
</dbReference>
<dbReference type="PIR" id="B98123">
    <property type="entry name" value="B98123"/>
</dbReference>
<dbReference type="RefSeq" id="NP_359604.1">
    <property type="nucleotide sequence ID" value="NC_003098.1"/>
</dbReference>
<dbReference type="RefSeq" id="WP_000867601.1">
    <property type="nucleotide sequence ID" value="NC_003098.1"/>
</dbReference>
<dbReference type="SMR" id="Q8CWM9"/>
<dbReference type="STRING" id="171101.spr2013"/>
<dbReference type="TCDB" id="3.A.11.1.2">
    <property type="family name" value="the bacterial competence-related dna transformation transporter (dna-t) family"/>
</dbReference>
<dbReference type="KEGG" id="spr:spr2013"/>
<dbReference type="PATRIC" id="fig|171101.6.peg.2178"/>
<dbReference type="eggNOG" id="COG4098">
    <property type="taxonomic scope" value="Bacteria"/>
</dbReference>
<dbReference type="HOGENOM" id="CLU_024742_0_0_9"/>
<dbReference type="Proteomes" id="UP000000586">
    <property type="component" value="Chromosome"/>
</dbReference>
<dbReference type="GO" id="GO:0043138">
    <property type="term" value="F:3'-5' DNA helicase activity"/>
    <property type="evidence" value="ECO:0000318"/>
    <property type="project" value="GO_Central"/>
</dbReference>
<dbReference type="GO" id="GO:0005524">
    <property type="term" value="F:ATP binding"/>
    <property type="evidence" value="ECO:0007669"/>
    <property type="project" value="UniProtKB-KW"/>
</dbReference>
<dbReference type="GO" id="GO:0016787">
    <property type="term" value="F:hydrolase activity"/>
    <property type="evidence" value="ECO:0007669"/>
    <property type="project" value="UniProtKB-KW"/>
</dbReference>
<dbReference type="GO" id="GO:0003676">
    <property type="term" value="F:nucleic acid binding"/>
    <property type="evidence" value="ECO:0007669"/>
    <property type="project" value="InterPro"/>
</dbReference>
<dbReference type="GO" id="GO:0006310">
    <property type="term" value="P:DNA recombination"/>
    <property type="evidence" value="ECO:0000318"/>
    <property type="project" value="GO_Central"/>
</dbReference>
<dbReference type="GO" id="GO:0006260">
    <property type="term" value="P:DNA replication"/>
    <property type="evidence" value="ECO:0000318"/>
    <property type="project" value="GO_Central"/>
</dbReference>
<dbReference type="GO" id="GO:0006270">
    <property type="term" value="P:DNA replication initiation"/>
    <property type="evidence" value="ECO:0000318"/>
    <property type="project" value="GO_Central"/>
</dbReference>
<dbReference type="GO" id="GO:0006302">
    <property type="term" value="P:double-strand break repair"/>
    <property type="evidence" value="ECO:0000318"/>
    <property type="project" value="GO_Central"/>
</dbReference>
<dbReference type="CDD" id="cd17925">
    <property type="entry name" value="DEXDc_ComFA"/>
    <property type="match status" value="1"/>
</dbReference>
<dbReference type="Gene3D" id="3.40.50.300">
    <property type="entry name" value="P-loop containing nucleotide triphosphate hydrolases"/>
    <property type="match status" value="2"/>
</dbReference>
<dbReference type="InterPro" id="IPR011545">
    <property type="entry name" value="DEAD/DEAH_box_helicase_dom"/>
</dbReference>
<dbReference type="InterPro" id="IPR014001">
    <property type="entry name" value="Helicase_ATP-bd"/>
</dbReference>
<dbReference type="InterPro" id="IPR001650">
    <property type="entry name" value="Helicase_C-like"/>
</dbReference>
<dbReference type="InterPro" id="IPR027417">
    <property type="entry name" value="P-loop_NTPase"/>
</dbReference>
<dbReference type="InterPro" id="IPR050880">
    <property type="entry name" value="PriA_helicase"/>
</dbReference>
<dbReference type="PANTHER" id="PTHR30580:SF1">
    <property type="entry name" value="COMF OPERON PROTEIN 1"/>
    <property type="match status" value="1"/>
</dbReference>
<dbReference type="PANTHER" id="PTHR30580">
    <property type="entry name" value="PRIMOSOMAL PROTEIN N"/>
    <property type="match status" value="1"/>
</dbReference>
<dbReference type="Pfam" id="PF00270">
    <property type="entry name" value="DEAD"/>
    <property type="match status" value="1"/>
</dbReference>
<dbReference type="Pfam" id="PF00271">
    <property type="entry name" value="Helicase_C"/>
    <property type="match status" value="1"/>
</dbReference>
<dbReference type="SMART" id="SM00487">
    <property type="entry name" value="DEXDc"/>
    <property type="match status" value="1"/>
</dbReference>
<dbReference type="SMART" id="SM00490">
    <property type="entry name" value="HELICc"/>
    <property type="match status" value="1"/>
</dbReference>
<dbReference type="SUPFAM" id="SSF52540">
    <property type="entry name" value="P-loop containing nucleoside triphosphate hydrolases"/>
    <property type="match status" value="1"/>
</dbReference>
<dbReference type="PROSITE" id="PS51192">
    <property type="entry name" value="HELICASE_ATP_BIND_1"/>
    <property type="match status" value="1"/>
</dbReference>
<dbReference type="PROSITE" id="PS51194">
    <property type="entry name" value="HELICASE_CTER"/>
    <property type="match status" value="1"/>
</dbReference>
<accession>Q8CWM9</accession>
<protein>
    <recommendedName>
        <fullName evidence="6">Competence protein ComFA</fullName>
        <ecNumber evidence="4">3.6.4.-</ecNumber>
    </recommendedName>
    <alternativeName>
        <fullName>ComF operon protein 1</fullName>
    </alternativeName>
</protein>